<comment type="function">
    <text evidence="1">Catalyzes the exchange of L-carnitine for gamma-butyrobetaine.</text>
</comment>
<comment type="catalytic activity">
    <reaction evidence="1">
        <text>4-(trimethylamino)butanoate(in) + (R)-carnitine(out) = 4-(trimethylamino)butanoate(out) + (R)-carnitine(in)</text>
        <dbReference type="Rhea" id="RHEA:29427"/>
        <dbReference type="ChEBI" id="CHEBI:16244"/>
        <dbReference type="ChEBI" id="CHEBI:16347"/>
    </reaction>
</comment>
<comment type="pathway">
    <text evidence="1">Amine and polyamine metabolism; carnitine metabolism.</text>
</comment>
<comment type="subunit">
    <text evidence="1">Homotrimer.</text>
</comment>
<comment type="subcellular location">
    <subcellularLocation>
        <location evidence="1">Cell inner membrane</location>
        <topology evidence="1">Multi-pass membrane protein</topology>
    </subcellularLocation>
</comment>
<comment type="similarity">
    <text evidence="1">Belongs to the BCCT transporter (TC 2.A.15) family. CaiT subfamily.</text>
</comment>
<sequence length="504" mass="56581">MKNEKRKTGIEPKVFFPPLIIVGILCWLTVRDLDAANVVINAVFSYVTNVWGWAFEWYMVVMLFGWFWLVFGPYAKKRLGNEPPEFSTASWIFMMFASCTSAAVLFWGSIEIYYYISTPPFGLEPNSTGAKELGLAYSLFLWGPLPWATYSFLSVAFAYFFFVRKMEVIRPSSTLVPLVGEKHAKGLFGTIVDNFYLVALIFAMGTSLGLATPLVTECMQWLFGIPHTLQLDAIIITCWIILNAICVACGLQKGVRIASDVRSYLSFLMLGWVFIVSGASFIMNYFTDSVGMLLMYLPRMLFYTDPIAKGGFPQGWTVFYWAWWVIYAIQMSIFLARISRGRTVRELCFGMVMGLTASTWILWTVLGSNTLLLIDKNIINIPNLIEQYGVARAIIETWAALPLSTATMWGFFILCFIATVTLVNACSYTLAMSTCREVRDGEEPPLLVRIGWSILVGIIGIVLLALGGLKPIQTAIIAGGCPLFFVNIMVTLSFIKDAKQNWKD</sequence>
<organism>
    <name type="scientific">Escherichia coli O157:H7</name>
    <dbReference type="NCBI Taxonomy" id="83334"/>
    <lineage>
        <taxon>Bacteria</taxon>
        <taxon>Pseudomonadati</taxon>
        <taxon>Pseudomonadota</taxon>
        <taxon>Gammaproteobacteria</taxon>
        <taxon>Enterobacterales</taxon>
        <taxon>Enterobacteriaceae</taxon>
        <taxon>Escherichia</taxon>
    </lineage>
</organism>
<accession>Q8XA30</accession>
<name>CAIT_ECO57</name>
<protein>
    <recommendedName>
        <fullName evidence="1">L-carnitine/gamma-butyrobetaine antiporter</fullName>
    </recommendedName>
</protein>
<gene>
    <name evidence="1" type="primary">caiT</name>
    <name type="ordered locus">Z0046</name>
    <name type="ordered locus">ECs0043</name>
</gene>
<evidence type="ECO:0000255" key="1">
    <source>
        <dbReference type="HAMAP-Rule" id="MF_01049"/>
    </source>
</evidence>
<feature type="chain" id="PRO_0000201488" description="L-carnitine/gamma-butyrobetaine antiporter">
    <location>
        <begin position="1"/>
        <end position="504"/>
    </location>
</feature>
<feature type="transmembrane region" description="Helical" evidence="1">
    <location>
        <begin position="10"/>
        <end position="30"/>
    </location>
</feature>
<feature type="transmembrane region" description="Helical" evidence="1">
    <location>
        <begin position="51"/>
        <end position="71"/>
    </location>
</feature>
<feature type="transmembrane region" description="Helical" evidence="1">
    <location>
        <begin position="92"/>
        <end position="112"/>
    </location>
</feature>
<feature type="transmembrane region" description="Helical" evidence="1">
    <location>
        <begin position="143"/>
        <end position="163"/>
    </location>
</feature>
<feature type="transmembrane region" description="Helical" evidence="1">
    <location>
        <begin position="195"/>
        <end position="215"/>
    </location>
</feature>
<feature type="transmembrane region" description="Helical" evidence="1">
    <location>
        <begin position="231"/>
        <end position="251"/>
    </location>
</feature>
<feature type="transmembrane region" description="Helical" evidence="1">
    <location>
        <begin position="263"/>
        <end position="283"/>
    </location>
</feature>
<feature type="transmembrane region" description="Helical" evidence="1">
    <location>
        <begin position="316"/>
        <end position="336"/>
    </location>
</feature>
<feature type="transmembrane region" description="Helical" evidence="1">
    <location>
        <begin position="347"/>
        <end position="367"/>
    </location>
</feature>
<feature type="transmembrane region" description="Helical" evidence="1">
    <location>
        <begin position="398"/>
        <end position="418"/>
    </location>
</feature>
<feature type="transmembrane region" description="Helical" evidence="1">
    <location>
        <begin position="446"/>
        <end position="466"/>
    </location>
</feature>
<feature type="transmembrane region" description="Helical" evidence="1">
    <location>
        <begin position="475"/>
        <end position="495"/>
    </location>
</feature>
<dbReference type="EMBL" id="AE005174">
    <property type="protein sequence ID" value="AAG54343.1"/>
    <property type="molecule type" value="Genomic_DNA"/>
</dbReference>
<dbReference type="EMBL" id="BA000007">
    <property type="protein sequence ID" value="BAB33466.1"/>
    <property type="molecule type" value="Genomic_DNA"/>
</dbReference>
<dbReference type="PIR" id="C85485">
    <property type="entry name" value="C85485"/>
</dbReference>
<dbReference type="PIR" id="C90634">
    <property type="entry name" value="C90634"/>
</dbReference>
<dbReference type="RefSeq" id="NP_308070.1">
    <property type="nucleotide sequence ID" value="NC_002695.1"/>
</dbReference>
<dbReference type="RefSeq" id="WP_000787124.1">
    <property type="nucleotide sequence ID" value="NZ_VOAI01000002.1"/>
</dbReference>
<dbReference type="SMR" id="Q8XA30"/>
<dbReference type="STRING" id="155864.Z0046"/>
<dbReference type="GeneID" id="913440"/>
<dbReference type="KEGG" id="ece:Z0046"/>
<dbReference type="KEGG" id="ecs:ECs_0043"/>
<dbReference type="PATRIC" id="fig|386585.9.peg.140"/>
<dbReference type="eggNOG" id="COG1292">
    <property type="taxonomic scope" value="Bacteria"/>
</dbReference>
<dbReference type="HOGENOM" id="CLU_010118_6_0_6"/>
<dbReference type="OMA" id="FYWAWAL"/>
<dbReference type="UniPathway" id="UPA00117"/>
<dbReference type="Proteomes" id="UP000000558">
    <property type="component" value="Chromosome"/>
</dbReference>
<dbReference type="Proteomes" id="UP000002519">
    <property type="component" value="Chromosome"/>
</dbReference>
<dbReference type="GO" id="GO:0005886">
    <property type="term" value="C:plasma membrane"/>
    <property type="evidence" value="ECO:0007669"/>
    <property type="project" value="UniProtKB-SubCell"/>
</dbReference>
<dbReference type="GO" id="GO:0044667">
    <property type="term" value="F:(R)-carnitine:4-(trimethylammonio)butanoate antiporter activity"/>
    <property type="evidence" value="ECO:0007669"/>
    <property type="project" value="UniProtKB-UniRule"/>
</dbReference>
<dbReference type="GO" id="GO:1900751">
    <property type="term" value="P:4-(trimethylammonio)butanoate transport"/>
    <property type="evidence" value="ECO:0007669"/>
    <property type="project" value="InterPro"/>
</dbReference>
<dbReference type="GO" id="GO:0009437">
    <property type="term" value="P:carnitine metabolic process"/>
    <property type="evidence" value="ECO:0007669"/>
    <property type="project" value="UniProtKB-UniRule"/>
</dbReference>
<dbReference type="HAMAP" id="MF_01049">
    <property type="entry name" value="CaiT"/>
    <property type="match status" value="1"/>
</dbReference>
<dbReference type="InterPro" id="IPR018093">
    <property type="entry name" value="BCCT_CS"/>
</dbReference>
<dbReference type="InterPro" id="IPR000060">
    <property type="entry name" value="BCCT_transptr"/>
</dbReference>
<dbReference type="InterPro" id="IPR023449">
    <property type="entry name" value="BCCT_transptr_CaiT"/>
</dbReference>
<dbReference type="NCBIfam" id="TIGR00842">
    <property type="entry name" value="bcct"/>
    <property type="match status" value="1"/>
</dbReference>
<dbReference type="NCBIfam" id="NF002887">
    <property type="entry name" value="PRK03356.1"/>
    <property type="match status" value="1"/>
</dbReference>
<dbReference type="PANTHER" id="PTHR30047">
    <property type="entry name" value="HIGH-AFFINITY CHOLINE TRANSPORT PROTEIN-RELATED"/>
    <property type="match status" value="1"/>
</dbReference>
<dbReference type="PANTHER" id="PTHR30047:SF11">
    <property type="entry name" value="L-CARNITINE_GAMMA-BUTYROBETAINE ANTIPORTER"/>
    <property type="match status" value="1"/>
</dbReference>
<dbReference type="Pfam" id="PF02028">
    <property type="entry name" value="BCCT"/>
    <property type="match status" value="1"/>
</dbReference>
<dbReference type="PROSITE" id="PS01303">
    <property type="entry name" value="BCCT"/>
    <property type="match status" value="1"/>
</dbReference>
<proteinExistence type="inferred from homology"/>
<keyword id="KW-0050">Antiport</keyword>
<keyword id="KW-0997">Cell inner membrane</keyword>
<keyword id="KW-1003">Cell membrane</keyword>
<keyword id="KW-0472">Membrane</keyword>
<keyword id="KW-1185">Reference proteome</keyword>
<keyword id="KW-0812">Transmembrane</keyword>
<keyword id="KW-1133">Transmembrane helix</keyword>
<keyword id="KW-0813">Transport</keyword>
<reference key="1">
    <citation type="journal article" date="2001" name="Nature">
        <title>Genome sequence of enterohaemorrhagic Escherichia coli O157:H7.</title>
        <authorList>
            <person name="Perna N.T."/>
            <person name="Plunkett G. III"/>
            <person name="Burland V."/>
            <person name="Mau B."/>
            <person name="Glasner J.D."/>
            <person name="Rose D.J."/>
            <person name="Mayhew G.F."/>
            <person name="Evans P.S."/>
            <person name="Gregor J."/>
            <person name="Kirkpatrick H.A."/>
            <person name="Posfai G."/>
            <person name="Hackett J."/>
            <person name="Klink S."/>
            <person name="Boutin A."/>
            <person name="Shao Y."/>
            <person name="Miller L."/>
            <person name="Grotbeck E.J."/>
            <person name="Davis N.W."/>
            <person name="Lim A."/>
            <person name="Dimalanta E.T."/>
            <person name="Potamousis K."/>
            <person name="Apodaca J."/>
            <person name="Anantharaman T.S."/>
            <person name="Lin J."/>
            <person name="Yen G."/>
            <person name="Schwartz D.C."/>
            <person name="Welch R.A."/>
            <person name="Blattner F.R."/>
        </authorList>
    </citation>
    <scope>NUCLEOTIDE SEQUENCE [LARGE SCALE GENOMIC DNA]</scope>
    <source>
        <strain>O157:H7 / EDL933 / ATCC 700927 / EHEC</strain>
    </source>
</reference>
<reference key="2">
    <citation type="journal article" date="2001" name="DNA Res.">
        <title>Complete genome sequence of enterohemorrhagic Escherichia coli O157:H7 and genomic comparison with a laboratory strain K-12.</title>
        <authorList>
            <person name="Hayashi T."/>
            <person name="Makino K."/>
            <person name="Ohnishi M."/>
            <person name="Kurokawa K."/>
            <person name="Ishii K."/>
            <person name="Yokoyama K."/>
            <person name="Han C.-G."/>
            <person name="Ohtsubo E."/>
            <person name="Nakayama K."/>
            <person name="Murata T."/>
            <person name="Tanaka M."/>
            <person name="Tobe T."/>
            <person name="Iida T."/>
            <person name="Takami H."/>
            <person name="Honda T."/>
            <person name="Sasakawa C."/>
            <person name="Ogasawara N."/>
            <person name="Yasunaga T."/>
            <person name="Kuhara S."/>
            <person name="Shiba T."/>
            <person name="Hattori M."/>
            <person name="Shinagawa H."/>
        </authorList>
    </citation>
    <scope>NUCLEOTIDE SEQUENCE [LARGE SCALE GENOMIC DNA]</scope>
    <source>
        <strain>O157:H7 / Sakai / RIMD 0509952 / EHEC</strain>
    </source>
</reference>